<organism>
    <name type="scientific">Rattus norvegicus</name>
    <name type="common">Rat</name>
    <dbReference type="NCBI Taxonomy" id="10116"/>
    <lineage>
        <taxon>Eukaryota</taxon>
        <taxon>Metazoa</taxon>
        <taxon>Chordata</taxon>
        <taxon>Craniata</taxon>
        <taxon>Vertebrata</taxon>
        <taxon>Euteleostomi</taxon>
        <taxon>Mammalia</taxon>
        <taxon>Eutheria</taxon>
        <taxon>Euarchontoglires</taxon>
        <taxon>Glires</taxon>
        <taxon>Rodentia</taxon>
        <taxon>Myomorpha</taxon>
        <taxon>Muroidea</taxon>
        <taxon>Muridae</taxon>
        <taxon>Murinae</taxon>
        <taxon>Rattus</taxon>
    </lineage>
</organism>
<proteinExistence type="evidence at protein level"/>
<feature type="chain" id="PRO_0000055707" description="Protein kinase C eta type">
    <location>
        <begin position="1"/>
        <end position="683"/>
    </location>
</feature>
<feature type="domain" description="C2" evidence="4">
    <location>
        <begin position="1"/>
        <end position="118"/>
    </location>
</feature>
<feature type="domain" description="Protein kinase" evidence="5">
    <location>
        <begin position="355"/>
        <end position="614"/>
    </location>
</feature>
<feature type="domain" description="AGC-kinase C-terminal" evidence="7">
    <location>
        <begin position="615"/>
        <end position="683"/>
    </location>
</feature>
<feature type="zinc finger region" description="Phorbol-ester/DAG-type 1" evidence="6">
    <location>
        <begin position="171"/>
        <end position="222"/>
    </location>
</feature>
<feature type="zinc finger region" description="Phorbol-ester/DAG-type 2" evidence="6">
    <location>
        <begin position="245"/>
        <end position="295"/>
    </location>
</feature>
<feature type="active site" description="Proton acceptor" evidence="5 8">
    <location>
        <position position="479"/>
    </location>
</feature>
<feature type="binding site" evidence="5">
    <location>
        <begin position="361"/>
        <end position="369"/>
    </location>
    <ligand>
        <name>ATP</name>
        <dbReference type="ChEBI" id="CHEBI:30616"/>
    </ligand>
</feature>
<feature type="binding site" evidence="5">
    <location>
        <position position="384"/>
    </location>
    <ligand>
        <name>ATP</name>
        <dbReference type="ChEBI" id="CHEBI:30616"/>
    </ligand>
</feature>
<feature type="modified residue" description="Phosphoserine" evidence="3">
    <location>
        <position position="28"/>
    </location>
</feature>
<feature type="modified residue" description="Phosphoserine" evidence="3">
    <location>
        <position position="32"/>
    </location>
</feature>
<feature type="modified residue" description="Phosphoserine" evidence="2">
    <location>
        <position position="317"/>
    </location>
</feature>
<feature type="modified residue" description="Phosphothreonine; by PDPK1" evidence="9">
    <location>
        <position position="513"/>
    </location>
</feature>
<feature type="modified residue" description="Phosphothreonine" evidence="10">
    <location>
        <position position="656"/>
    </location>
</feature>
<feature type="modified residue" description="Phosphoserine" evidence="10">
    <location>
        <position position="675"/>
    </location>
</feature>
<sequence>MSSGTMKFNGYLRVRIGEAVGLQPTRWSLRHSLFKKGHQLLDPYLTVSVDQVRVGQTSTKQKTNKPTYNEEFCTNVSDGGHLELAVFHETPLGYDHFVANCTLQFQELLRTAGTSDTFEGWVDLEPEGKVFVVITLTGSFTEATLQRDRIFKHFTRKRQRAMRRRVHQVNGHKFMATYLRQPTYCSHCREFIWGVFGKQGYQCQVCTCVVHKRCHHLIVTACTCQNNINKVDAKIAEQRFGINIPHKFNVHNYKVPTFCDHCGSLLWGIMRQGLQCKICKMNVHIRCQANVAPNCGVNAVELAKTLAGMGLQPGNISPTSKLISRSTLRRQGKEGSKEGNGIGVNSSSRFGIDNFEFIRVLGKGSFGKVMLARIKETGELYAVKVLKKDVILQDDDVECTMTEKRILSLARNHPFLTQLFCCFQTPDRLFFVMEFVNGGDLMFHIQKSRRFDEARARFYAAEIISALMFLHEKGIIYRDLKLDNVLLDHEGHCKLADFGMCKEGICNGVTTATFCGTPDYIAPEILQEMLYGPAVDWWAMGVLLYEMLCGHAPFEAENEDDLFEAILNDEVVYPTWLHEDATGILKSFMTKNPTMRLGSLTQGGEHEILRHPFFKEIDWVQLNHRQLEPPFRPRIKSREDVSNFDPDFIKEEPVLTPIDEGHLPMINQDEFRNFSYVSPELQP</sequence>
<evidence type="ECO:0000250" key="1"/>
<evidence type="ECO:0000250" key="2">
    <source>
        <dbReference type="UniProtKB" id="P23298"/>
    </source>
</evidence>
<evidence type="ECO:0000250" key="3">
    <source>
        <dbReference type="UniProtKB" id="P24723"/>
    </source>
</evidence>
<evidence type="ECO:0000255" key="4">
    <source>
        <dbReference type="PROSITE-ProRule" id="PRU00041"/>
    </source>
</evidence>
<evidence type="ECO:0000255" key="5">
    <source>
        <dbReference type="PROSITE-ProRule" id="PRU00159"/>
    </source>
</evidence>
<evidence type="ECO:0000255" key="6">
    <source>
        <dbReference type="PROSITE-ProRule" id="PRU00226"/>
    </source>
</evidence>
<evidence type="ECO:0000255" key="7">
    <source>
        <dbReference type="PROSITE-ProRule" id="PRU00618"/>
    </source>
</evidence>
<evidence type="ECO:0000255" key="8">
    <source>
        <dbReference type="PROSITE-ProRule" id="PRU10027"/>
    </source>
</evidence>
<evidence type="ECO:0000305" key="9"/>
<evidence type="ECO:0007744" key="10">
    <source>
    </source>
</evidence>
<dbReference type="EC" id="2.7.11.13"/>
<dbReference type="EMBL" id="X68400">
    <property type="protein sequence ID" value="CAA48466.1"/>
    <property type="molecule type" value="mRNA"/>
</dbReference>
<dbReference type="EMBL" id="BC081782">
    <property type="protein sequence ID" value="AAH81782.1"/>
    <property type="molecule type" value="mRNA"/>
</dbReference>
<dbReference type="PIR" id="I60246">
    <property type="entry name" value="S29478"/>
</dbReference>
<dbReference type="RefSeq" id="NP_112347.1">
    <property type="nucleotide sequence ID" value="NM_031085.2"/>
</dbReference>
<dbReference type="SMR" id="Q64617"/>
<dbReference type="BioGRID" id="249621">
    <property type="interactions" value="4"/>
</dbReference>
<dbReference type="FunCoup" id="Q64617">
    <property type="interactions" value="767"/>
</dbReference>
<dbReference type="STRING" id="10116.ENSRNOP00000006729"/>
<dbReference type="BindingDB" id="Q64617"/>
<dbReference type="ChEMBL" id="CHEMBL2094266"/>
<dbReference type="DrugCentral" id="Q64617"/>
<dbReference type="iPTMnet" id="Q64617"/>
<dbReference type="PhosphoSitePlus" id="Q64617"/>
<dbReference type="PaxDb" id="10116-ENSRNOP00000006729"/>
<dbReference type="Ensembl" id="ENSRNOT00000006729.8">
    <property type="protein sequence ID" value="ENSRNOP00000006729.7"/>
    <property type="gene ID" value="ENSRNOG00000004873.8"/>
</dbReference>
<dbReference type="GeneID" id="81749"/>
<dbReference type="KEGG" id="rno:81749"/>
<dbReference type="UCSC" id="RGD:621888">
    <property type="organism name" value="rat"/>
</dbReference>
<dbReference type="AGR" id="RGD:621888"/>
<dbReference type="CTD" id="5583"/>
<dbReference type="RGD" id="621888">
    <property type="gene designation" value="Prkch"/>
</dbReference>
<dbReference type="eggNOG" id="KOG0694">
    <property type="taxonomic scope" value="Eukaryota"/>
</dbReference>
<dbReference type="GeneTree" id="ENSGT00940000158220"/>
<dbReference type="HOGENOM" id="CLU_000288_54_4_1"/>
<dbReference type="InParanoid" id="Q64617"/>
<dbReference type="OMA" id="MTKNPNM"/>
<dbReference type="OrthoDB" id="63267at2759"/>
<dbReference type="PhylomeDB" id="Q64617"/>
<dbReference type="TreeFam" id="TF351133"/>
<dbReference type="BRENDA" id="2.7.11.13">
    <property type="organism ID" value="5301"/>
</dbReference>
<dbReference type="Reactome" id="R-RNO-114508">
    <property type="pathway name" value="Effects of PIP2 hydrolysis"/>
</dbReference>
<dbReference type="PRO" id="PR:Q64617"/>
<dbReference type="Proteomes" id="UP000002494">
    <property type="component" value="Chromosome 6"/>
</dbReference>
<dbReference type="Bgee" id="ENSRNOG00000004873">
    <property type="expression patterns" value="Expressed in lung and 18 other cell types or tissues"/>
</dbReference>
<dbReference type="GO" id="GO:0005911">
    <property type="term" value="C:cell-cell junction"/>
    <property type="evidence" value="ECO:0000266"/>
    <property type="project" value="RGD"/>
</dbReference>
<dbReference type="GO" id="GO:0005737">
    <property type="term" value="C:cytoplasm"/>
    <property type="evidence" value="ECO:0000266"/>
    <property type="project" value="RGD"/>
</dbReference>
<dbReference type="GO" id="GO:0005829">
    <property type="term" value="C:cytosol"/>
    <property type="evidence" value="ECO:0000266"/>
    <property type="project" value="RGD"/>
</dbReference>
<dbReference type="GO" id="GO:0005886">
    <property type="term" value="C:plasma membrane"/>
    <property type="evidence" value="ECO:0000266"/>
    <property type="project" value="RGD"/>
</dbReference>
<dbReference type="GO" id="GO:0005524">
    <property type="term" value="F:ATP binding"/>
    <property type="evidence" value="ECO:0007669"/>
    <property type="project" value="UniProtKB-KW"/>
</dbReference>
<dbReference type="GO" id="GO:0004699">
    <property type="term" value="F:diacylglycerol-dependent, calcium-independent serine/threonine kinase activity"/>
    <property type="evidence" value="ECO:0000314"/>
    <property type="project" value="RGD"/>
</dbReference>
<dbReference type="GO" id="GO:0019899">
    <property type="term" value="F:enzyme binding"/>
    <property type="evidence" value="ECO:0000266"/>
    <property type="project" value="RGD"/>
</dbReference>
<dbReference type="GO" id="GO:0004672">
    <property type="term" value="F:protein kinase activity"/>
    <property type="evidence" value="ECO:0000266"/>
    <property type="project" value="RGD"/>
</dbReference>
<dbReference type="GO" id="GO:0106310">
    <property type="term" value="F:protein serine kinase activity"/>
    <property type="evidence" value="ECO:0007669"/>
    <property type="project" value="RHEA"/>
</dbReference>
<dbReference type="GO" id="GO:0004674">
    <property type="term" value="F:protein serine/threonine kinase activity"/>
    <property type="evidence" value="ECO:0000318"/>
    <property type="project" value="GO_Central"/>
</dbReference>
<dbReference type="GO" id="GO:0120283">
    <property type="term" value="F:protein serine/threonine kinase binding"/>
    <property type="evidence" value="ECO:0000266"/>
    <property type="project" value="RGD"/>
</dbReference>
<dbReference type="GO" id="GO:0030291">
    <property type="term" value="F:protein serine/threonine kinase inhibitor activity"/>
    <property type="evidence" value="ECO:0000266"/>
    <property type="project" value="RGD"/>
</dbReference>
<dbReference type="GO" id="GO:0031267">
    <property type="term" value="F:small GTPase binding"/>
    <property type="evidence" value="ECO:0000266"/>
    <property type="project" value="RGD"/>
</dbReference>
<dbReference type="GO" id="GO:0045182">
    <property type="term" value="F:translation regulator activity"/>
    <property type="evidence" value="ECO:0000266"/>
    <property type="project" value="RGD"/>
</dbReference>
<dbReference type="GO" id="GO:0008270">
    <property type="term" value="F:zinc ion binding"/>
    <property type="evidence" value="ECO:0007669"/>
    <property type="project" value="UniProtKB-KW"/>
</dbReference>
<dbReference type="GO" id="GO:0030154">
    <property type="term" value="P:cell differentiation"/>
    <property type="evidence" value="ECO:0007669"/>
    <property type="project" value="UniProtKB-KW"/>
</dbReference>
<dbReference type="GO" id="GO:0034198">
    <property type="term" value="P:cellular response to amino acid starvation"/>
    <property type="evidence" value="ECO:0000266"/>
    <property type="project" value="RGD"/>
</dbReference>
<dbReference type="GO" id="GO:0035556">
    <property type="term" value="P:intracellular signal transduction"/>
    <property type="evidence" value="ECO:0000318"/>
    <property type="project" value="GO_Central"/>
</dbReference>
<dbReference type="GO" id="GO:0034351">
    <property type="term" value="P:negative regulation of glial cell apoptotic process"/>
    <property type="evidence" value="ECO:0000250"/>
    <property type="project" value="UniProtKB"/>
</dbReference>
<dbReference type="GO" id="GO:0017148">
    <property type="term" value="P:negative regulation of translation"/>
    <property type="evidence" value="ECO:0000266"/>
    <property type="project" value="RGD"/>
</dbReference>
<dbReference type="GO" id="GO:0141212">
    <property type="term" value="P:phospholipase C/protein kinase C signal transduction"/>
    <property type="evidence" value="ECO:0000315"/>
    <property type="project" value="RGD"/>
</dbReference>
<dbReference type="GO" id="GO:0050861">
    <property type="term" value="P:positive regulation of B cell receptor signaling pathway"/>
    <property type="evidence" value="ECO:0000250"/>
    <property type="project" value="UniProtKB"/>
</dbReference>
<dbReference type="GO" id="GO:0060252">
    <property type="term" value="P:positive regulation of glial cell proliferation"/>
    <property type="evidence" value="ECO:0000250"/>
    <property type="project" value="UniProtKB"/>
</dbReference>
<dbReference type="GO" id="GO:0045618">
    <property type="term" value="P:positive regulation of keratinocyte differentiation"/>
    <property type="evidence" value="ECO:0000250"/>
    <property type="project" value="UniProtKB"/>
</dbReference>
<dbReference type="GO" id="GO:0010744">
    <property type="term" value="P:positive regulation of macrophage derived foam cell differentiation"/>
    <property type="evidence" value="ECO:0000250"/>
    <property type="project" value="UniProtKB"/>
</dbReference>
<dbReference type="GO" id="GO:0051092">
    <property type="term" value="P:positive regulation of NF-kappaB transcription factor activity"/>
    <property type="evidence" value="ECO:0000250"/>
    <property type="project" value="UniProtKB"/>
</dbReference>
<dbReference type="GO" id="GO:0032056">
    <property type="term" value="P:positive regulation of translation in response to stress"/>
    <property type="evidence" value="ECO:0000266"/>
    <property type="project" value="RGD"/>
</dbReference>
<dbReference type="GO" id="GO:2000810">
    <property type="term" value="P:regulation of bicellular tight junction assembly"/>
    <property type="evidence" value="ECO:0000250"/>
    <property type="project" value="UniProtKB"/>
</dbReference>
<dbReference type="CDD" id="cd20835">
    <property type="entry name" value="C1_nPKC_epsilon-like_rpt1"/>
    <property type="match status" value="1"/>
</dbReference>
<dbReference type="CDD" id="cd20838">
    <property type="entry name" value="C1_nPKC_epsilon-like_rpt2"/>
    <property type="match status" value="1"/>
</dbReference>
<dbReference type="CDD" id="cd04014">
    <property type="entry name" value="C2_PKC_epsilon"/>
    <property type="match status" value="1"/>
</dbReference>
<dbReference type="CDD" id="cd05590">
    <property type="entry name" value="STKc_nPKC_eta"/>
    <property type="match status" value="1"/>
</dbReference>
<dbReference type="FunFam" id="3.30.200.20:FF:000080">
    <property type="entry name" value="Protein kinase C"/>
    <property type="match status" value="1"/>
</dbReference>
<dbReference type="FunFam" id="3.30.60.20:FF:000003">
    <property type="entry name" value="Protein kinase C delta"/>
    <property type="match status" value="1"/>
</dbReference>
<dbReference type="FunFam" id="1.10.510.10:FF:000126">
    <property type="entry name" value="Protein kinase C epsilon"/>
    <property type="match status" value="1"/>
</dbReference>
<dbReference type="FunFam" id="2.60.40.150:FF:000056">
    <property type="entry name" value="Protein kinase C epsilon"/>
    <property type="match status" value="1"/>
</dbReference>
<dbReference type="FunFam" id="3.30.60.20:FF:000024">
    <property type="entry name" value="Protein kinase C epsilon"/>
    <property type="match status" value="1"/>
</dbReference>
<dbReference type="Gene3D" id="3.30.60.20">
    <property type="match status" value="2"/>
</dbReference>
<dbReference type="Gene3D" id="2.60.40.150">
    <property type="entry name" value="C2 domain"/>
    <property type="match status" value="1"/>
</dbReference>
<dbReference type="Gene3D" id="3.30.200.20">
    <property type="entry name" value="Phosphorylase Kinase, domain 1"/>
    <property type="match status" value="1"/>
</dbReference>
<dbReference type="Gene3D" id="1.10.510.10">
    <property type="entry name" value="Transferase(Phosphotransferase) domain 1"/>
    <property type="match status" value="1"/>
</dbReference>
<dbReference type="InterPro" id="IPR000961">
    <property type="entry name" value="AGC-kinase_C"/>
</dbReference>
<dbReference type="InterPro" id="IPR046349">
    <property type="entry name" value="C1-like_sf"/>
</dbReference>
<dbReference type="InterPro" id="IPR000008">
    <property type="entry name" value="C2_dom"/>
</dbReference>
<dbReference type="InterPro" id="IPR035892">
    <property type="entry name" value="C2_domain_sf"/>
</dbReference>
<dbReference type="InterPro" id="IPR020454">
    <property type="entry name" value="DAG/PE-bd"/>
</dbReference>
<dbReference type="InterPro" id="IPR011009">
    <property type="entry name" value="Kinase-like_dom_sf"/>
</dbReference>
<dbReference type="InterPro" id="IPR034665">
    <property type="entry name" value="nPKC_eta"/>
</dbReference>
<dbReference type="InterPro" id="IPR002219">
    <property type="entry name" value="PE/DAG-bd"/>
</dbReference>
<dbReference type="InterPro" id="IPR027431">
    <property type="entry name" value="PKC_eta"/>
</dbReference>
<dbReference type="InterPro" id="IPR017892">
    <property type="entry name" value="Pkinase_C"/>
</dbReference>
<dbReference type="InterPro" id="IPR014376">
    <property type="entry name" value="Prot_kin_PKC_delta"/>
</dbReference>
<dbReference type="InterPro" id="IPR000719">
    <property type="entry name" value="Prot_kinase_dom"/>
</dbReference>
<dbReference type="InterPro" id="IPR017441">
    <property type="entry name" value="Protein_kinase_ATP_BS"/>
</dbReference>
<dbReference type="InterPro" id="IPR008271">
    <property type="entry name" value="Ser/Thr_kinase_AS"/>
</dbReference>
<dbReference type="PANTHER" id="PTHR24351">
    <property type="entry name" value="RIBOSOMAL PROTEIN S6 KINASE"/>
    <property type="match status" value="1"/>
</dbReference>
<dbReference type="Pfam" id="PF00130">
    <property type="entry name" value="C1_1"/>
    <property type="match status" value="2"/>
</dbReference>
<dbReference type="Pfam" id="PF00168">
    <property type="entry name" value="C2"/>
    <property type="match status" value="1"/>
</dbReference>
<dbReference type="Pfam" id="PF00069">
    <property type="entry name" value="Pkinase"/>
    <property type="match status" value="1"/>
</dbReference>
<dbReference type="Pfam" id="PF00433">
    <property type="entry name" value="Pkinase_C"/>
    <property type="match status" value="1"/>
</dbReference>
<dbReference type="PIRSF" id="PIRSF000551">
    <property type="entry name" value="PKC_delta"/>
    <property type="match status" value="1"/>
</dbReference>
<dbReference type="PIRSF" id="PIRSF501107">
    <property type="entry name" value="Protein_kin_C_eta"/>
    <property type="match status" value="1"/>
</dbReference>
<dbReference type="PRINTS" id="PR00008">
    <property type="entry name" value="DAGPEDOMAIN"/>
</dbReference>
<dbReference type="SMART" id="SM00109">
    <property type="entry name" value="C1"/>
    <property type="match status" value="2"/>
</dbReference>
<dbReference type="SMART" id="SM00239">
    <property type="entry name" value="C2"/>
    <property type="match status" value="1"/>
</dbReference>
<dbReference type="SMART" id="SM00133">
    <property type="entry name" value="S_TK_X"/>
    <property type="match status" value="1"/>
</dbReference>
<dbReference type="SMART" id="SM00220">
    <property type="entry name" value="S_TKc"/>
    <property type="match status" value="1"/>
</dbReference>
<dbReference type="SUPFAM" id="SSF49562">
    <property type="entry name" value="C2 domain (Calcium/lipid-binding domain, CaLB)"/>
    <property type="match status" value="1"/>
</dbReference>
<dbReference type="SUPFAM" id="SSF57889">
    <property type="entry name" value="Cysteine-rich domain"/>
    <property type="match status" value="2"/>
</dbReference>
<dbReference type="SUPFAM" id="SSF56112">
    <property type="entry name" value="Protein kinase-like (PK-like)"/>
    <property type="match status" value="1"/>
</dbReference>
<dbReference type="PROSITE" id="PS51285">
    <property type="entry name" value="AGC_KINASE_CTER"/>
    <property type="match status" value="1"/>
</dbReference>
<dbReference type="PROSITE" id="PS50004">
    <property type="entry name" value="C2"/>
    <property type="match status" value="1"/>
</dbReference>
<dbReference type="PROSITE" id="PS00107">
    <property type="entry name" value="PROTEIN_KINASE_ATP"/>
    <property type="match status" value="1"/>
</dbReference>
<dbReference type="PROSITE" id="PS50011">
    <property type="entry name" value="PROTEIN_KINASE_DOM"/>
    <property type="match status" value="1"/>
</dbReference>
<dbReference type="PROSITE" id="PS00108">
    <property type="entry name" value="PROTEIN_KINASE_ST"/>
    <property type="match status" value="1"/>
</dbReference>
<dbReference type="PROSITE" id="PS00479">
    <property type="entry name" value="ZF_DAG_PE_1"/>
    <property type="match status" value="2"/>
</dbReference>
<dbReference type="PROSITE" id="PS50081">
    <property type="entry name" value="ZF_DAG_PE_2"/>
    <property type="match status" value="2"/>
</dbReference>
<gene>
    <name type="primary">Prkch</name>
    <name type="synonym">Pkch</name>
</gene>
<reference key="1">
    <citation type="journal article" date="1992" name="FEBS Lett.">
        <title>Biochemical properties of rat protein kinase C-eta expressed in COS cells.</title>
        <authorList>
            <person name="Dekker L.V."/>
            <person name="Parker P.J."/>
            <person name="McIntyre P."/>
        </authorList>
    </citation>
    <scope>NUCLEOTIDE SEQUENCE [MRNA]</scope>
    <source>
        <strain>Sprague-Dawley</strain>
        <tissue>Lung</tissue>
    </source>
</reference>
<reference key="2">
    <citation type="journal article" date="2004" name="Genome Res.">
        <title>The status, quality, and expansion of the NIH full-length cDNA project: the Mammalian Gene Collection (MGC).</title>
        <authorList>
            <consortium name="The MGC Project Team"/>
        </authorList>
    </citation>
    <scope>NUCLEOTIDE SEQUENCE [LARGE SCALE MRNA]</scope>
    <source>
        <tissue>Lung</tissue>
    </source>
</reference>
<reference key="3">
    <citation type="journal article" date="2012" name="Nat. Commun.">
        <title>Quantitative maps of protein phosphorylation sites across 14 different rat organs and tissues.</title>
        <authorList>
            <person name="Lundby A."/>
            <person name="Secher A."/>
            <person name="Lage K."/>
            <person name="Nordsborg N.B."/>
            <person name="Dmytriyev A."/>
            <person name="Lundby C."/>
            <person name="Olsen J.V."/>
        </authorList>
    </citation>
    <scope>PHOSPHORYLATION [LARGE SCALE ANALYSIS] AT THR-656 AND SER-675</scope>
    <scope>IDENTIFICATION BY MASS SPECTROMETRY [LARGE SCALE ANALYSIS]</scope>
</reference>
<keyword id="KW-0067">ATP-binding</keyword>
<keyword id="KW-0963">Cytoplasm</keyword>
<keyword id="KW-0221">Differentiation</keyword>
<keyword id="KW-0418">Kinase</keyword>
<keyword id="KW-0479">Metal-binding</keyword>
<keyword id="KW-0547">Nucleotide-binding</keyword>
<keyword id="KW-0597">Phosphoprotein</keyword>
<keyword id="KW-1185">Reference proteome</keyword>
<keyword id="KW-0677">Repeat</keyword>
<keyword id="KW-0723">Serine/threonine-protein kinase</keyword>
<keyword id="KW-0808">Transferase</keyword>
<keyword id="KW-0862">Zinc</keyword>
<keyword id="KW-0863">Zinc-finger</keyword>
<protein>
    <recommendedName>
        <fullName>Protein kinase C eta type</fullName>
        <ecNumber>2.7.11.13</ecNumber>
    </recommendedName>
    <alternativeName>
        <fullName>PKC-L</fullName>
    </alternativeName>
    <alternativeName>
        <fullName>nPKC-eta</fullName>
    </alternativeName>
</protein>
<comment type="function">
    <text evidence="1">Calcium-independent, phospholipid- and diacylglycerol (DAG)-dependent serine/threonine-protein kinase that is involved in the regulation of cell differentiation in keratinocytes and pre-B cell receptor, mediates regulation of epithelial tight junction integrity and foam cell formation, and is required for glioblastoma proliferation and apoptosis prevention in MCF-7 cells. In keratinocytes, binds and activates the tyrosine kinase FYN, which in turn blocks epidermal growth factor receptor (EGFR) signaling and leads to keratinocyte growth arrest and differentiation. Associates with the cyclin CCNE1-CDK2-CDKN1B complex and inhibits CDK2 kinase activity, leading to RB1 dephosphorylation and thereby G1 arrest in keratinocytes. In association with RALA activates actin depolymerization, which is necessary for keratinocyte differentiation. In the pre-B cell receptor signaling, functions downstream of BLNK by up-regulating IRF4, which in turn activates L chain gene rearrangement. Regulates epithelial tight junctions (TJs) by phosphorylating occludin (OCLN) on threonine residues, which is necessary for the assembly and maintenance of TJs. In association with PLD2 and via TLR4 signaling, is involved in lipopolysaccharide (LPS)-induced RGS2 down-regulation and foam cell formation. Upon PMA stimulation, mediates glioblastoma cell proliferation by activating the mTOR pathway, the PI3K/AKT pathway and the ERK1-dependent phosphorylation of ELK1. Involved in the protection of glioblastoma cells from irradiation-induced apoptosis by preventing caspase-9 activation. In camptothecin-treated MCF-7 cells, regulates NF-kappa-B upstream signaling by activating IKBKB, and confers protection against DNA damage-induced apoptosis. Promotes oncogenic functions of ATF2 in the nucleus while blocking its apoptotic function at mitochondria. Phosphorylates ATF2 which promotes its nuclear retention and transcriptional activity and negatively regulates its mitochondrial localization (By similarity).</text>
</comment>
<comment type="catalytic activity">
    <reaction>
        <text>L-seryl-[protein] + ATP = O-phospho-L-seryl-[protein] + ADP + H(+)</text>
        <dbReference type="Rhea" id="RHEA:17989"/>
        <dbReference type="Rhea" id="RHEA-COMP:9863"/>
        <dbReference type="Rhea" id="RHEA-COMP:11604"/>
        <dbReference type="ChEBI" id="CHEBI:15378"/>
        <dbReference type="ChEBI" id="CHEBI:29999"/>
        <dbReference type="ChEBI" id="CHEBI:30616"/>
        <dbReference type="ChEBI" id="CHEBI:83421"/>
        <dbReference type="ChEBI" id="CHEBI:456216"/>
        <dbReference type="EC" id="2.7.11.13"/>
    </reaction>
</comment>
<comment type="catalytic activity">
    <reaction>
        <text>L-threonyl-[protein] + ATP = O-phospho-L-threonyl-[protein] + ADP + H(+)</text>
        <dbReference type="Rhea" id="RHEA:46608"/>
        <dbReference type="Rhea" id="RHEA-COMP:11060"/>
        <dbReference type="Rhea" id="RHEA-COMP:11605"/>
        <dbReference type="ChEBI" id="CHEBI:15378"/>
        <dbReference type="ChEBI" id="CHEBI:30013"/>
        <dbReference type="ChEBI" id="CHEBI:30616"/>
        <dbReference type="ChEBI" id="CHEBI:61977"/>
        <dbReference type="ChEBI" id="CHEBI:456216"/>
        <dbReference type="EC" id="2.7.11.13"/>
    </reaction>
</comment>
<comment type="activity regulation">
    <text>Novel PKCs (PRKCD, PRKCE, PRKCH and PRKCQ) are calcium-insensitive, but activated by diacylglycerol (DAG) and phosphatidylserine. Three specific sites; Thr-513 (activation loop of the kinase domain), Thr-656 (turn motif) and Ser-675 (hydrophobic region), need to be phosphorylated for its full activation.</text>
</comment>
<comment type="subunit">
    <text evidence="2 3">Interacts with FYN (By similarity). Interacts with RALA (By similarity). Interacts with DGKQ (By similarity).</text>
</comment>
<comment type="subcellular location">
    <subcellularLocation>
        <location evidence="1">Cytoplasm</location>
    </subcellularLocation>
</comment>
<comment type="domain">
    <text>The C1 domain, containing the phorbol ester/DAG-type region 1 (C1A) and 2 (C1B), is the diacylglycerol sensor and the C2 domain is a non-calcium binding domain.</text>
</comment>
<comment type="similarity">
    <text evidence="9">Belongs to the protein kinase superfamily. AGC Ser/Thr protein kinase family. PKC subfamily.</text>
</comment>
<accession>Q64617</accession>
<name>KPCL_RAT</name>